<name>SPB1_CRYNJ</name>
<gene>
    <name evidence="1" type="primary">SPB1</name>
    <name type="ordered locus">CNB02570</name>
</gene>
<sequence>MGKHDKKTGKGRLDKFYRLAKEQGYRARSAFKLVHLNRKYDLLSKARCCIDLCAAPGGWLQVAEKYMPKGSLIIGVDLNAIKPLPHVTTFVADITTPHCRQTLRQHMHDWKADLVLHDGAPNVGSAWVQDAFTQNELVLQSLKLATEFLAKGGSFVTKVFRSQDYNSLLWVFGQLFKSVEATKPPSSRNVSAEIFVVCRDFIAPKHIDPKFLDPKHVFKDIASLPTSITEPTDTSIAPTSSSTASAAAAAARLAANSHAHSNVYAPEKKRRHREGYAEGDYTLHHTASAEEFVRGQDPVLLLGNMNKIEFRNETEKGWLKSRHTTPDIIANFEDLKVLGKGDFKALMKWRLAIRLEIGLDVKADKTQDATEEVVVEPMDEEEQITEELQKLQQAKLAKTKRERKRANEKKARELLKLQLNMTVPDDLDQNDLALQGEEEIFDLEEGENEARRRGKNGGLATLVDDGEGMDLASESEEEEDEDEEDDEVLDSDEERERKTAALEGELDGLYDSYVERKKERDAKWKVKQDRLKDKNFDAWHGIQEKSDEEGSDDDDGQDDDEEGGWDVIAQKKAKYGEGDSSDSDSDAEPETEVPKKIKKVSFEKPARSEKSSGLMTSLREPELRAQRSKQAQLWFDQPVFKEVGDLAALDGDDEEEEEEDESEEEESDDEDVDMEDASESSSTLEGDDDFEIVPQAPEDDGPEWDVDDEDQDEVKKKVIQDKGLLTAEAVSLATALVNRKTTADKLIDQGFNRLSAHNKDGLPTWFLDDESQFYKPNIPITKEAVDALRARQRALDARPIKKVAEAKGRKKMKAVARMEKAKKKADGVMESEEMGDGEKARQVRRMLARAAKGKEKAKEKKIVVAKGVNKGVKGRPTGVKGKYKIVDARMRKEVRALKRIKKAGSKRR</sequence>
<comment type="function">
    <text evidence="1">Required for proper assembly of pre-ribosomal particles during the biogenesis of the 60S ribosomal subunit.</text>
</comment>
<comment type="catalytic activity">
    <reaction evidence="1">
        <text>a ribonucleotide in rRNA + S-adenosyl-L-methionine = a 2'-O-methylribonucleotide in rRNA + S-adenosyl-L-homocysteine + H(+)</text>
        <dbReference type="Rhea" id="RHEA:48628"/>
        <dbReference type="Rhea" id="RHEA-COMP:12164"/>
        <dbReference type="Rhea" id="RHEA-COMP:12165"/>
        <dbReference type="ChEBI" id="CHEBI:15378"/>
        <dbReference type="ChEBI" id="CHEBI:57856"/>
        <dbReference type="ChEBI" id="CHEBI:59789"/>
        <dbReference type="ChEBI" id="CHEBI:90675"/>
        <dbReference type="ChEBI" id="CHEBI:90676"/>
    </reaction>
</comment>
<comment type="subunit">
    <text evidence="1">Component of the nucleolar and nucleoplasmic pre-60S ribosomal particle.</text>
</comment>
<comment type="subcellular location">
    <subcellularLocation>
        <location evidence="1">Nucleus</location>
        <location evidence="1">Nucleolus</location>
    </subcellularLocation>
</comment>
<comment type="similarity">
    <text evidence="1">Belongs to the class I-like SAM-binding methyltransferase superfamily. RNA methyltransferase RlmE family. SPB1 subfamily.</text>
</comment>
<feature type="chain" id="PRO_0000155595" description="AdoMet-dependent rRNA methyltransferase SPB1">
    <location>
        <begin position="1"/>
        <end position="908"/>
    </location>
</feature>
<feature type="region of interest" description="Disordered" evidence="2">
    <location>
        <begin position="440"/>
        <end position="513"/>
    </location>
</feature>
<feature type="region of interest" description="Disordered" evidence="2">
    <location>
        <begin position="535"/>
        <end position="715"/>
    </location>
</feature>
<feature type="region of interest" description="Disordered" evidence="2">
    <location>
        <begin position="806"/>
        <end position="841"/>
    </location>
</feature>
<feature type="coiled-coil region" evidence="1">
    <location>
        <begin position="378"/>
        <end position="422"/>
    </location>
</feature>
<feature type="compositionally biased region" description="Acidic residues" evidence="2">
    <location>
        <begin position="464"/>
        <end position="493"/>
    </location>
</feature>
<feature type="compositionally biased region" description="Basic and acidic residues" evidence="2">
    <location>
        <begin position="535"/>
        <end position="545"/>
    </location>
</feature>
<feature type="compositionally biased region" description="Acidic residues" evidence="2">
    <location>
        <begin position="546"/>
        <end position="564"/>
    </location>
</feature>
<feature type="compositionally biased region" description="Acidic residues" evidence="2">
    <location>
        <begin position="579"/>
        <end position="591"/>
    </location>
</feature>
<feature type="compositionally biased region" description="Basic and acidic residues" evidence="2">
    <location>
        <begin position="592"/>
        <end position="610"/>
    </location>
</feature>
<feature type="compositionally biased region" description="Acidic residues" evidence="2">
    <location>
        <begin position="650"/>
        <end position="678"/>
    </location>
</feature>
<feature type="compositionally biased region" description="Acidic residues" evidence="2">
    <location>
        <begin position="685"/>
        <end position="712"/>
    </location>
</feature>
<feature type="compositionally biased region" description="Basic and acidic residues" evidence="2">
    <location>
        <begin position="816"/>
        <end position="827"/>
    </location>
</feature>
<feature type="active site" description="Proton acceptor" evidence="1">
    <location>
        <position position="158"/>
    </location>
</feature>
<feature type="binding site" evidence="1">
    <location>
        <position position="57"/>
    </location>
    <ligand>
        <name>S-adenosyl-L-methionine</name>
        <dbReference type="ChEBI" id="CHEBI:59789"/>
    </ligand>
</feature>
<feature type="binding site" evidence="1">
    <location>
        <position position="59"/>
    </location>
    <ligand>
        <name>S-adenosyl-L-methionine</name>
        <dbReference type="ChEBI" id="CHEBI:59789"/>
    </ligand>
</feature>
<feature type="binding site" evidence="1">
    <location>
        <position position="77"/>
    </location>
    <ligand>
        <name>S-adenosyl-L-methionine</name>
        <dbReference type="ChEBI" id="CHEBI:59789"/>
    </ligand>
</feature>
<feature type="binding site" evidence="1">
    <location>
        <position position="93"/>
    </location>
    <ligand>
        <name>S-adenosyl-L-methionine</name>
        <dbReference type="ChEBI" id="CHEBI:59789"/>
    </ligand>
</feature>
<feature type="binding site" evidence="1">
    <location>
        <position position="118"/>
    </location>
    <ligand>
        <name>S-adenosyl-L-methionine</name>
        <dbReference type="ChEBI" id="CHEBI:59789"/>
    </ligand>
</feature>
<proteinExistence type="inferred from homology"/>
<dbReference type="EC" id="2.1.1.-" evidence="1"/>
<dbReference type="EMBL" id="AE017342">
    <property type="protein sequence ID" value="AAW41873.1"/>
    <property type="molecule type" value="Genomic_DNA"/>
</dbReference>
<dbReference type="RefSeq" id="XP_569180.1">
    <property type="nucleotide sequence ID" value="XM_569180.1"/>
</dbReference>
<dbReference type="SMR" id="P0CS78"/>
<dbReference type="FunCoup" id="P0CS78">
    <property type="interactions" value="596"/>
</dbReference>
<dbReference type="STRING" id="214684.P0CS78"/>
<dbReference type="PaxDb" id="214684-P0CS78"/>
<dbReference type="EnsemblFungi" id="AAW41873">
    <property type="protein sequence ID" value="AAW41873"/>
    <property type="gene ID" value="CNB02570"/>
</dbReference>
<dbReference type="GeneID" id="3255646"/>
<dbReference type="KEGG" id="cne:CNB02570"/>
<dbReference type="VEuPathDB" id="FungiDB:CNB02570"/>
<dbReference type="eggNOG" id="KOG1098">
    <property type="taxonomic scope" value="Eukaryota"/>
</dbReference>
<dbReference type="HOGENOM" id="CLU_009422_8_1_1"/>
<dbReference type="InParanoid" id="P0CS78"/>
<dbReference type="OMA" id="QRKDKYY"/>
<dbReference type="OrthoDB" id="1287559at2759"/>
<dbReference type="Proteomes" id="UP000002149">
    <property type="component" value="Chromosome 2"/>
</dbReference>
<dbReference type="GO" id="GO:0005730">
    <property type="term" value="C:nucleolus"/>
    <property type="evidence" value="ECO:0000318"/>
    <property type="project" value="GO_Central"/>
</dbReference>
<dbReference type="GO" id="GO:0030687">
    <property type="term" value="C:preribosome, large subunit precursor"/>
    <property type="evidence" value="ECO:0000318"/>
    <property type="project" value="GO_Central"/>
</dbReference>
<dbReference type="GO" id="GO:0016435">
    <property type="term" value="F:rRNA (guanine) methyltransferase activity"/>
    <property type="evidence" value="ECO:0000318"/>
    <property type="project" value="GO_Central"/>
</dbReference>
<dbReference type="GO" id="GO:0070039">
    <property type="term" value="F:rRNA (guanosine-2'-O-)-methyltransferase activity"/>
    <property type="evidence" value="ECO:0007669"/>
    <property type="project" value="UniProtKB-UniRule"/>
</dbReference>
<dbReference type="GO" id="GO:0008650">
    <property type="term" value="F:rRNA (uridine-2'-O-)-methyltransferase activity"/>
    <property type="evidence" value="ECO:0000318"/>
    <property type="project" value="GO_Central"/>
</dbReference>
<dbReference type="GO" id="GO:0000466">
    <property type="term" value="P:maturation of 5.8S rRNA from tricistronic rRNA transcript (SSU-rRNA, 5.8S rRNA, LSU-rRNA)"/>
    <property type="evidence" value="ECO:0000318"/>
    <property type="project" value="GO_Central"/>
</dbReference>
<dbReference type="GO" id="GO:0000463">
    <property type="term" value="P:maturation of LSU-rRNA from tricistronic rRNA transcript (SSU-rRNA, 5.8S rRNA, LSU-rRNA)"/>
    <property type="evidence" value="ECO:0000318"/>
    <property type="project" value="GO_Central"/>
</dbReference>
<dbReference type="GO" id="GO:0031167">
    <property type="term" value="P:rRNA methylation"/>
    <property type="evidence" value="ECO:0000318"/>
    <property type="project" value="GO_Central"/>
</dbReference>
<dbReference type="FunFam" id="3.40.50.150:FF:000004">
    <property type="entry name" value="AdoMet-dependent rRNA methyltransferase SPB1"/>
    <property type="match status" value="1"/>
</dbReference>
<dbReference type="Gene3D" id="3.40.50.150">
    <property type="entry name" value="Vaccinia Virus protein VP39"/>
    <property type="match status" value="1"/>
</dbReference>
<dbReference type="HAMAP" id="MF_01547">
    <property type="entry name" value="RNA_methyltr_E"/>
    <property type="match status" value="1"/>
</dbReference>
<dbReference type="HAMAP" id="MF_03163">
    <property type="entry name" value="RNA_methyltr_E_SPB1"/>
    <property type="match status" value="1"/>
</dbReference>
<dbReference type="InterPro" id="IPR050082">
    <property type="entry name" value="RNA_methyltr_RlmE"/>
</dbReference>
<dbReference type="InterPro" id="IPR002877">
    <property type="entry name" value="RNA_MeTrfase_FtsJ_dom"/>
</dbReference>
<dbReference type="InterPro" id="IPR015507">
    <property type="entry name" value="rRNA-MeTfrase_E"/>
</dbReference>
<dbReference type="InterPro" id="IPR012920">
    <property type="entry name" value="rRNA_MeTfrase_SPB1-like_C"/>
</dbReference>
<dbReference type="InterPro" id="IPR024576">
    <property type="entry name" value="rRNA_MeTfrase_Spb1_DUF3381"/>
</dbReference>
<dbReference type="InterPro" id="IPR029063">
    <property type="entry name" value="SAM-dependent_MTases_sf"/>
</dbReference>
<dbReference type="InterPro" id="IPR028589">
    <property type="entry name" value="SPB1-like"/>
</dbReference>
<dbReference type="PANTHER" id="PTHR10920:SF13">
    <property type="entry name" value="PRE-RRNA 2'-O-RIBOSE RNA METHYLTRANSFERASE FTSJ3"/>
    <property type="match status" value="1"/>
</dbReference>
<dbReference type="PANTHER" id="PTHR10920">
    <property type="entry name" value="RIBOSOMAL RNA METHYLTRANSFERASE"/>
    <property type="match status" value="1"/>
</dbReference>
<dbReference type="Pfam" id="PF11861">
    <property type="entry name" value="DUF3381"/>
    <property type="match status" value="1"/>
</dbReference>
<dbReference type="Pfam" id="PF01728">
    <property type="entry name" value="FtsJ"/>
    <property type="match status" value="1"/>
</dbReference>
<dbReference type="Pfam" id="PF07780">
    <property type="entry name" value="Spb1_C"/>
    <property type="match status" value="1"/>
</dbReference>
<dbReference type="SUPFAM" id="SSF53335">
    <property type="entry name" value="S-adenosyl-L-methionine-dependent methyltransferases"/>
    <property type="match status" value="1"/>
</dbReference>
<protein>
    <recommendedName>
        <fullName evidence="1">AdoMet-dependent rRNA methyltransferase SPB1</fullName>
        <ecNumber evidence="1">2.1.1.-</ecNumber>
    </recommendedName>
    <alternativeName>
        <fullName evidence="1">2'-O-ribose RNA methyltransferase</fullName>
    </alternativeName>
    <alternativeName>
        <fullName evidence="1">S-adenosyl-L-methionine-dependent methyltransferase</fullName>
    </alternativeName>
</protein>
<accession>P0CS78</accession>
<accession>Q55XQ3</accession>
<accession>Q5KM86</accession>
<organism>
    <name type="scientific">Cryptococcus neoformans var. neoformans serotype D (strain JEC21 / ATCC MYA-565)</name>
    <name type="common">Filobasidiella neoformans</name>
    <dbReference type="NCBI Taxonomy" id="214684"/>
    <lineage>
        <taxon>Eukaryota</taxon>
        <taxon>Fungi</taxon>
        <taxon>Dikarya</taxon>
        <taxon>Basidiomycota</taxon>
        <taxon>Agaricomycotina</taxon>
        <taxon>Tremellomycetes</taxon>
        <taxon>Tremellales</taxon>
        <taxon>Cryptococcaceae</taxon>
        <taxon>Cryptococcus</taxon>
        <taxon>Cryptococcus neoformans species complex</taxon>
    </lineage>
</organism>
<evidence type="ECO:0000255" key="1">
    <source>
        <dbReference type="HAMAP-Rule" id="MF_03163"/>
    </source>
</evidence>
<evidence type="ECO:0000256" key="2">
    <source>
        <dbReference type="SAM" id="MobiDB-lite"/>
    </source>
</evidence>
<reference key="1">
    <citation type="journal article" date="2005" name="Science">
        <title>The genome of the basidiomycetous yeast and human pathogen Cryptococcus neoformans.</title>
        <authorList>
            <person name="Loftus B.J."/>
            <person name="Fung E."/>
            <person name="Roncaglia P."/>
            <person name="Rowley D."/>
            <person name="Amedeo P."/>
            <person name="Bruno D."/>
            <person name="Vamathevan J."/>
            <person name="Miranda M."/>
            <person name="Anderson I.J."/>
            <person name="Fraser J.A."/>
            <person name="Allen J.E."/>
            <person name="Bosdet I.E."/>
            <person name="Brent M.R."/>
            <person name="Chiu R."/>
            <person name="Doering T.L."/>
            <person name="Donlin M.J."/>
            <person name="D'Souza C.A."/>
            <person name="Fox D.S."/>
            <person name="Grinberg V."/>
            <person name="Fu J."/>
            <person name="Fukushima M."/>
            <person name="Haas B.J."/>
            <person name="Huang J.C."/>
            <person name="Janbon G."/>
            <person name="Jones S.J.M."/>
            <person name="Koo H.L."/>
            <person name="Krzywinski M.I."/>
            <person name="Kwon-Chung K.J."/>
            <person name="Lengeler K.B."/>
            <person name="Maiti R."/>
            <person name="Marra M.A."/>
            <person name="Marra R.E."/>
            <person name="Mathewson C.A."/>
            <person name="Mitchell T.G."/>
            <person name="Pertea M."/>
            <person name="Riggs F.R."/>
            <person name="Salzberg S.L."/>
            <person name="Schein J.E."/>
            <person name="Shvartsbeyn A."/>
            <person name="Shin H."/>
            <person name="Shumway M."/>
            <person name="Specht C.A."/>
            <person name="Suh B.B."/>
            <person name="Tenney A."/>
            <person name="Utterback T.R."/>
            <person name="Wickes B.L."/>
            <person name="Wortman J.R."/>
            <person name="Wye N.H."/>
            <person name="Kronstad J.W."/>
            <person name="Lodge J.K."/>
            <person name="Heitman J."/>
            <person name="Davis R.W."/>
            <person name="Fraser C.M."/>
            <person name="Hyman R.W."/>
        </authorList>
    </citation>
    <scope>NUCLEOTIDE SEQUENCE [LARGE SCALE GENOMIC DNA]</scope>
    <source>
        <strain>JEC21 / ATCC MYA-565</strain>
    </source>
</reference>
<keyword id="KW-0175">Coiled coil</keyword>
<keyword id="KW-0489">Methyltransferase</keyword>
<keyword id="KW-0539">Nucleus</keyword>
<keyword id="KW-1185">Reference proteome</keyword>
<keyword id="KW-0690">Ribosome biogenesis</keyword>
<keyword id="KW-0698">rRNA processing</keyword>
<keyword id="KW-0949">S-adenosyl-L-methionine</keyword>
<keyword id="KW-0808">Transferase</keyword>